<sequence length="1040" mass="112112">MQVLPPSSTGGPSRLFIMRPVATTLLMVAILLAGIIGYRALPVSALPEVDYPTIQVVTLYPGASPDVMTSAVTAPLERQFGQMSGLKQMSSQSSGGASVITLQFQLTLPLDVAEQEVQAAINAATNLLPSDLPNPPVYSKVNPADPPIMTLAVTSTAMPMTQVEDMVETRVAQKISQISGVGLVTLSGGQRPAVRVKLNAQAIAALGLTSETVRTAITGANVNSAKGSLDGPSRAVTLSANDQMQSAEEYRQLIIAYQNGAPIRLGDVATVEQGAENSWLGAWANKEQAIVMNVQRQPGANIISTADSIRQMLPQLTESLPKSVKVTVLSDRTTNIRASVDDTQFELMMAITLVVMIIYLFLRNIPATIIPGVAVPLSLIGTFAVMVFLDFSINNLTLMALTIATGFVVDDAIVVIENISRYIEKGEKPLAAALKGAGEIGFTIISLTFSLIAVLIPLLFMGDIVGRLFREFAITLAVAILISAVVSLTLTPMMCARMLSQESLRKQNRFSRASEKMFDRIIAAYGRGLAKVLNHPWLTLSVALSTLLLSVLLWVFIPKGFFPVQDNGIIQGTLQAPQSSSFANMAQRQRQVADVILQDPAVQSLTSFVGVDGTNPSLNSARLQINLKPLDERDDRVQKVIARLQTAVDKVPGVDLFLQPTQDLTIDTQVSRTQYQFTLQATSLDALSTWVPQLMEKLQQLPQISDVSSDWQDKGLVAYVNVDRDSASRLGISMADVDNALYNAFGQRLISTIYTQANQYRVVLEHNTENTPGLAALDTIRLTSSDGGVVPLSSIAKIEQRFAPLSINHLDQFPVTTISFNVPDNYSLGDAVQAIMDTEKTLNLPVDITTQFQGSTLAFQSALGSTVWLIVAAVVAMYIVLGILYESFIHPITILSTLPTAGVGALLALMIAGSELDVIAIIGIILLIGIVKKNAIMMIDFALAAEREQGMSPRDAIYQACLLRFRPILMTTLAALLGALPLMLSTGVGAELRRPLGIGMVGGLIVSQVLTLFTTPVIYLLFDRLALWTKSRFARHEEEA</sequence>
<reference key="1">
    <citation type="journal article" date="2011" name="Proc. Natl. Acad. Sci. U.S.A.">
        <title>Genomic anatomy of Escherichia coli O157:H7 outbreaks.</title>
        <authorList>
            <person name="Eppinger M."/>
            <person name="Mammel M.K."/>
            <person name="Leclerc J.E."/>
            <person name="Ravel J."/>
            <person name="Cebula T.A."/>
        </authorList>
    </citation>
    <scope>NUCLEOTIDE SEQUENCE [LARGE SCALE GENOMIC DNA]</scope>
    <source>
        <strain>EC4115 / EHEC</strain>
    </source>
</reference>
<keyword id="KW-0997">Cell inner membrane</keyword>
<keyword id="KW-1003">Cell membrane</keyword>
<keyword id="KW-0472">Membrane</keyword>
<keyword id="KW-0812">Transmembrane</keyword>
<keyword id="KW-1133">Transmembrane helix</keyword>
<keyword id="KW-0813">Transport</keyword>
<comment type="function">
    <text evidence="1">The MdtABC tripartite complex confers resistance against novobiocin and deoxycholate.</text>
</comment>
<comment type="subunit">
    <text evidence="1">Part of a tripartite efflux system composed of MdtA, MdtB and MdtC. MdtB forms a heteromultimer with MdtC.</text>
</comment>
<comment type="subcellular location">
    <subcellularLocation>
        <location evidence="1">Cell inner membrane</location>
        <topology evidence="1">Multi-pass membrane protein</topology>
    </subcellularLocation>
</comment>
<comment type="induction">
    <text>The mdtABC operon is transcriptionally activated by BaeR.</text>
</comment>
<comment type="similarity">
    <text evidence="1">Belongs to the resistance-nodulation-cell division (RND) (TC 2.A.6) family. MdtB subfamily.</text>
</comment>
<name>MDTB_ECO5E</name>
<feature type="chain" id="PRO_1000145648" description="Multidrug resistance protein MdtB">
    <location>
        <begin position="1"/>
        <end position="1040"/>
    </location>
</feature>
<feature type="transmembrane region" description="Helical" evidence="1">
    <location>
        <begin position="16"/>
        <end position="36"/>
    </location>
</feature>
<feature type="transmembrane region" description="Helical" evidence="1">
    <location>
        <begin position="347"/>
        <end position="367"/>
    </location>
</feature>
<feature type="transmembrane region" description="Helical" evidence="1">
    <location>
        <begin position="369"/>
        <end position="389"/>
    </location>
</feature>
<feature type="transmembrane region" description="Helical" evidence="1">
    <location>
        <begin position="396"/>
        <end position="416"/>
    </location>
</feature>
<feature type="transmembrane region" description="Helical" evidence="1">
    <location>
        <begin position="440"/>
        <end position="460"/>
    </location>
</feature>
<feature type="transmembrane region" description="Helical" evidence="1">
    <location>
        <begin position="472"/>
        <end position="492"/>
    </location>
</feature>
<feature type="transmembrane region" description="Helical" evidence="1">
    <location>
        <begin position="537"/>
        <end position="557"/>
    </location>
</feature>
<feature type="transmembrane region" description="Helical" evidence="1">
    <location>
        <begin position="863"/>
        <end position="883"/>
    </location>
</feature>
<feature type="transmembrane region" description="Helical" evidence="1">
    <location>
        <begin position="888"/>
        <end position="908"/>
    </location>
</feature>
<feature type="transmembrane region" description="Helical" evidence="1">
    <location>
        <begin position="911"/>
        <end position="931"/>
    </location>
</feature>
<feature type="transmembrane region" description="Helical" evidence="1">
    <location>
        <begin position="968"/>
        <end position="988"/>
    </location>
</feature>
<feature type="transmembrane region" description="Helical" evidence="1">
    <location>
        <begin position="998"/>
        <end position="1018"/>
    </location>
</feature>
<accession>B5YUD3</accession>
<gene>
    <name evidence="1" type="primary">mdtB</name>
    <name type="ordered locus">ECH74115_3015</name>
</gene>
<proteinExistence type="evidence at transcript level"/>
<dbReference type="EMBL" id="CP001164">
    <property type="protein sequence ID" value="ACI38383.1"/>
    <property type="molecule type" value="Genomic_DNA"/>
</dbReference>
<dbReference type="RefSeq" id="WP_001197900.1">
    <property type="nucleotide sequence ID" value="NC_011353.1"/>
</dbReference>
<dbReference type="SMR" id="B5YUD3"/>
<dbReference type="KEGG" id="ecf:ECH74115_3015"/>
<dbReference type="HOGENOM" id="CLU_002755_1_2_6"/>
<dbReference type="GO" id="GO:0005886">
    <property type="term" value="C:plasma membrane"/>
    <property type="evidence" value="ECO:0007669"/>
    <property type="project" value="UniProtKB-SubCell"/>
</dbReference>
<dbReference type="GO" id="GO:0042910">
    <property type="term" value="F:xenobiotic transmembrane transporter activity"/>
    <property type="evidence" value="ECO:0007669"/>
    <property type="project" value="TreeGrafter"/>
</dbReference>
<dbReference type="FunFam" id="1.20.1640.10:FF:000001">
    <property type="entry name" value="Efflux pump membrane transporter"/>
    <property type="match status" value="1"/>
</dbReference>
<dbReference type="FunFam" id="3.30.70.1430:FF:000001">
    <property type="entry name" value="Efflux pump membrane transporter"/>
    <property type="match status" value="1"/>
</dbReference>
<dbReference type="FunFam" id="3.30.2090.10:FF:000003">
    <property type="entry name" value="Multidrug resistance protein MdtB"/>
    <property type="match status" value="1"/>
</dbReference>
<dbReference type="FunFam" id="3.30.2090.10:FF:000006">
    <property type="entry name" value="Multidrug resistance protein MdtB"/>
    <property type="match status" value="1"/>
</dbReference>
<dbReference type="Gene3D" id="3.30.70.1430">
    <property type="entry name" value="Multidrug efflux transporter AcrB pore domain"/>
    <property type="match status" value="2"/>
</dbReference>
<dbReference type="Gene3D" id="3.30.70.1440">
    <property type="entry name" value="Multidrug efflux transporter AcrB pore domain"/>
    <property type="match status" value="1"/>
</dbReference>
<dbReference type="Gene3D" id="3.30.70.1320">
    <property type="entry name" value="Multidrug efflux transporter AcrB pore domain like"/>
    <property type="match status" value="1"/>
</dbReference>
<dbReference type="Gene3D" id="3.30.2090.10">
    <property type="entry name" value="Multidrug efflux transporter AcrB TolC docking domain, DN and DC subdomains"/>
    <property type="match status" value="2"/>
</dbReference>
<dbReference type="Gene3D" id="1.20.1640.10">
    <property type="entry name" value="Multidrug efflux transporter AcrB transmembrane domain"/>
    <property type="match status" value="2"/>
</dbReference>
<dbReference type="HAMAP" id="MF_01423">
    <property type="entry name" value="MdtB"/>
    <property type="match status" value="1"/>
</dbReference>
<dbReference type="InterPro" id="IPR027463">
    <property type="entry name" value="AcrB_DN_DC_subdom"/>
</dbReference>
<dbReference type="InterPro" id="IPR001036">
    <property type="entry name" value="Acrflvin-R"/>
</dbReference>
<dbReference type="InterPro" id="IPR022831">
    <property type="entry name" value="Multidrug-R_MdtB"/>
</dbReference>
<dbReference type="NCBIfam" id="NF007798">
    <property type="entry name" value="PRK10503.1"/>
    <property type="match status" value="1"/>
</dbReference>
<dbReference type="NCBIfam" id="NF033617">
    <property type="entry name" value="RND_permease_2"/>
    <property type="match status" value="1"/>
</dbReference>
<dbReference type="PANTHER" id="PTHR32063">
    <property type="match status" value="1"/>
</dbReference>
<dbReference type="PANTHER" id="PTHR32063:SF21">
    <property type="entry name" value="MULTIDRUG RESISTANCE PROTEIN MDTB"/>
    <property type="match status" value="1"/>
</dbReference>
<dbReference type="Pfam" id="PF00873">
    <property type="entry name" value="ACR_tran"/>
    <property type="match status" value="1"/>
</dbReference>
<dbReference type="PRINTS" id="PR00702">
    <property type="entry name" value="ACRIFLAVINRP"/>
</dbReference>
<dbReference type="SUPFAM" id="SSF82693">
    <property type="entry name" value="Multidrug efflux transporter AcrB pore domain, PN1, PN2, PC1 and PC2 subdomains"/>
    <property type="match status" value="3"/>
</dbReference>
<dbReference type="SUPFAM" id="SSF82714">
    <property type="entry name" value="Multidrug efflux transporter AcrB TolC docking domain, DN and DC subdomains"/>
    <property type="match status" value="2"/>
</dbReference>
<dbReference type="SUPFAM" id="SSF82866">
    <property type="entry name" value="Multidrug efflux transporter AcrB transmembrane domain"/>
    <property type="match status" value="2"/>
</dbReference>
<organism>
    <name type="scientific">Escherichia coli O157:H7 (strain EC4115 / EHEC)</name>
    <dbReference type="NCBI Taxonomy" id="444450"/>
    <lineage>
        <taxon>Bacteria</taxon>
        <taxon>Pseudomonadati</taxon>
        <taxon>Pseudomonadota</taxon>
        <taxon>Gammaproteobacteria</taxon>
        <taxon>Enterobacterales</taxon>
        <taxon>Enterobacteriaceae</taxon>
        <taxon>Escherichia</taxon>
    </lineage>
</organism>
<evidence type="ECO:0000255" key="1">
    <source>
        <dbReference type="HAMAP-Rule" id="MF_01423"/>
    </source>
</evidence>
<protein>
    <recommendedName>
        <fullName evidence="1">Multidrug resistance protein MdtB</fullName>
    </recommendedName>
    <alternativeName>
        <fullName evidence="1">Multidrug transporter MdtB</fullName>
    </alternativeName>
</protein>